<gene>
    <name evidence="1" type="primary">atpE</name>
    <name type="ordered locus">Shal_4299</name>
</gene>
<sequence>METVISFTAIAVAIMIGLAALGTGIGFAILGGKFLEASARQPELAPALQTKMFIVAGLLDAISMIAVGVALFFVFANPFLGQLAG</sequence>
<protein>
    <recommendedName>
        <fullName evidence="1">ATP synthase subunit c</fullName>
    </recommendedName>
    <alternativeName>
        <fullName evidence="1">ATP synthase F(0) sector subunit c</fullName>
    </alternativeName>
    <alternativeName>
        <fullName evidence="1">F-type ATPase subunit c</fullName>
        <shortName evidence="1">F-ATPase subunit c</shortName>
    </alternativeName>
    <alternativeName>
        <fullName evidence="1">Lipid-binding protein</fullName>
    </alternativeName>
</protein>
<reference key="1">
    <citation type="submission" date="2008-01" db="EMBL/GenBank/DDBJ databases">
        <title>Complete sequence of Shewanella halifaxensis HAW-EB4.</title>
        <authorList>
            <consortium name="US DOE Joint Genome Institute"/>
            <person name="Copeland A."/>
            <person name="Lucas S."/>
            <person name="Lapidus A."/>
            <person name="Glavina del Rio T."/>
            <person name="Dalin E."/>
            <person name="Tice H."/>
            <person name="Bruce D."/>
            <person name="Goodwin L."/>
            <person name="Pitluck S."/>
            <person name="Sims D."/>
            <person name="Brettin T."/>
            <person name="Detter J.C."/>
            <person name="Han C."/>
            <person name="Kuske C.R."/>
            <person name="Schmutz J."/>
            <person name="Larimer F."/>
            <person name="Land M."/>
            <person name="Hauser L."/>
            <person name="Kyrpides N."/>
            <person name="Kim E."/>
            <person name="Zhao J.-S."/>
            <person name="Richardson P."/>
        </authorList>
    </citation>
    <scope>NUCLEOTIDE SEQUENCE [LARGE SCALE GENOMIC DNA]</scope>
    <source>
        <strain>HAW-EB4</strain>
    </source>
</reference>
<name>ATPL_SHEHH</name>
<evidence type="ECO:0000255" key="1">
    <source>
        <dbReference type="HAMAP-Rule" id="MF_01396"/>
    </source>
</evidence>
<feature type="chain" id="PRO_1000184473" description="ATP synthase subunit c">
    <location>
        <begin position="1"/>
        <end position="85"/>
    </location>
</feature>
<feature type="transmembrane region" description="Helical" evidence="1">
    <location>
        <begin position="10"/>
        <end position="30"/>
    </location>
</feature>
<feature type="transmembrane region" description="Helical" evidence="1">
    <location>
        <begin position="53"/>
        <end position="73"/>
    </location>
</feature>
<feature type="site" description="Reversibly protonated during proton transport" evidence="1">
    <location>
        <position position="60"/>
    </location>
</feature>
<keyword id="KW-0066">ATP synthesis</keyword>
<keyword id="KW-0997">Cell inner membrane</keyword>
<keyword id="KW-1003">Cell membrane</keyword>
<keyword id="KW-0138">CF(0)</keyword>
<keyword id="KW-0375">Hydrogen ion transport</keyword>
<keyword id="KW-0406">Ion transport</keyword>
<keyword id="KW-0446">Lipid-binding</keyword>
<keyword id="KW-0472">Membrane</keyword>
<keyword id="KW-0812">Transmembrane</keyword>
<keyword id="KW-1133">Transmembrane helix</keyword>
<keyword id="KW-0813">Transport</keyword>
<accession>B0TQF9</accession>
<comment type="function">
    <text evidence="1">F(1)F(0) ATP synthase produces ATP from ADP in the presence of a proton or sodium gradient. F-type ATPases consist of two structural domains, F(1) containing the extramembraneous catalytic core and F(0) containing the membrane proton channel, linked together by a central stalk and a peripheral stalk. During catalysis, ATP synthesis in the catalytic domain of F(1) is coupled via a rotary mechanism of the central stalk subunits to proton translocation.</text>
</comment>
<comment type="function">
    <text evidence="1">Key component of the F(0) channel; it plays a direct role in translocation across the membrane. A homomeric c-ring of between 10-14 subunits forms the central stalk rotor element with the F(1) delta and epsilon subunits.</text>
</comment>
<comment type="subunit">
    <text evidence="1">F-type ATPases have 2 components, F(1) - the catalytic core - and F(0) - the membrane proton channel. F(1) has five subunits: alpha(3), beta(3), gamma(1), delta(1), epsilon(1). F(0) has three main subunits: a(1), b(2) and c(10-14). The alpha and beta chains form an alternating ring which encloses part of the gamma chain. F(1) is attached to F(0) by a central stalk formed by the gamma and epsilon chains, while a peripheral stalk is formed by the delta and b chains.</text>
</comment>
<comment type="subcellular location">
    <subcellularLocation>
        <location evidence="1">Cell inner membrane</location>
        <topology evidence="1">Multi-pass membrane protein</topology>
    </subcellularLocation>
</comment>
<comment type="similarity">
    <text evidence="1">Belongs to the ATPase C chain family.</text>
</comment>
<dbReference type="EMBL" id="CP000931">
    <property type="protein sequence ID" value="ABZ78839.1"/>
    <property type="molecule type" value="Genomic_DNA"/>
</dbReference>
<dbReference type="RefSeq" id="WP_012157432.1">
    <property type="nucleotide sequence ID" value="NC_010334.1"/>
</dbReference>
<dbReference type="SMR" id="B0TQF9"/>
<dbReference type="STRING" id="458817.Shal_4299"/>
<dbReference type="KEGG" id="shl:Shal_4299"/>
<dbReference type="eggNOG" id="ENOG5032S3K">
    <property type="taxonomic scope" value="Bacteria"/>
</dbReference>
<dbReference type="HOGENOM" id="CLU_148047_1_0_6"/>
<dbReference type="OrthoDB" id="9811659at2"/>
<dbReference type="Proteomes" id="UP000001317">
    <property type="component" value="Chromosome"/>
</dbReference>
<dbReference type="GO" id="GO:0005886">
    <property type="term" value="C:plasma membrane"/>
    <property type="evidence" value="ECO:0007669"/>
    <property type="project" value="UniProtKB-SubCell"/>
</dbReference>
<dbReference type="GO" id="GO:0045259">
    <property type="term" value="C:proton-transporting ATP synthase complex"/>
    <property type="evidence" value="ECO:0007669"/>
    <property type="project" value="UniProtKB-KW"/>
</dbReference>
<dbReference type="GO" id="GO:0033177">
    <property type="term" value="C:proton-transporting two-sector ATPase complex, proton-transporting domain"/>
    <property type="evidence" value="ECO:0007669"/>
    <property type="project" value="InterPro"/>
</dbReference>
<dbReference type="GO" id="GO:0008289">
    <property type="term" value="F:lipid binding"/>
    <property type="evidence" value="ECO:0007669"/>
    <property type="project" value="UniProtKB-KW"/>
</dbReference>
<dbReference type="GO" id="GO:0046933">
    <property type="term" value="F:proton-transporting ATP synthase activity, rotational mechanism"/>
    <property type="evidence" value="ECO:0007669"/>
    <property type="project" value="UniProtKB-UniRule"/>
</dbReference>
<dbReference type="CDD" id="cd18185">
    <property type="entry name" value="ATP-synt_Fo_c_ATPE"/>
    <property type="match status" value="1"/>
</dbReference>
<dbReference type="FunFam" id="1.20.20.10:FF:000002">
    <property type="entry name" value="ATP synthase subunit c"/>
    <property type="match status" value="1"/>
</dbReference>
<dbReference type="Gene3D" id="1.20.20.10">
    <property type="entry name" value="F1F0 ATP synthase subunit C"/>
    <property type="match status" value="1"/>
</dbReference>
<dbReference type="HAMAP" id="MF_01396">
    <property type="entry name" value="ATP_synth_c_bact"/>
    <property type="match status" value="1"/>
</dbReference>
<dbReference type="InterPro" id="IPR005953">
    <property type="entry name" value="ATP_synth_csu_bac/chlpt"/>
</dbReference>
<dbReference type="InterPro" id="IPR000454">
    <property type="entry name" value="ATP_synth_F0_csu"/>
</dbReference>
<dbReference type="InterPro" id="IPR020537">
    <property type="entry name" value="ATP_synth_F0_csu_DDCD_BS"/>
</dbReference>
<dbReference type="InterPro" id="IPR038662">
    <property type="entry name" value="ATP_synth_F0_csu_sf"/>
</dbReference>
<dbReference type="InterPro" id="IPR002379">
    <property type="entry name" value="ATPase_proteolipid_c-like_dom"/>
</dbReference>
<dbReference type="InterPro" id="IPR035921">
    <property type="entry name" value="F/V-ATP_Csub_sf"/>
</dbReference>
<dbReference type="NCBIfam" id="TIGR01260">
    <property type="entry name" value="ATP_synt_c"/>
    <property type="match status" value="1"/>
</dbReference>
<dbReference type="NCBIfam" id="NF005363">
    <property type="entry name" value="PRK06876.1"/>
    <property type="match status" value="1"/>
</dbReference>
<dbReference type="Pfam" id="PF00137">
    <property type="entry name" value="ATP-synt_C"/>
    <property type="match status" value="1"/>
</dbReference>
<dbReference type="PRINTS" id="PR00124">
    <property type="entry name" value="ATPASEC"/>
</dbReference>
<dbReference type="SUPFAM" id="SSF81333">
    <property type="entry name" value="F1F0 ATP synthase subunit C"/>
    <property type="match status" value="1"/>
</dbReference>
<dbReference type="PROSITE" id="PS00605">
    <property type="entry name" value="ATPASE_C"/>
    <property type="match status" value="1"/>
</dbReference>
<organism>
    <name type="scientific">Shewanella halifaxensis (strain HAW-EB4)</name>
    <dbReference type="NCBI Taxonomy" id="458817"/>
    <lineage>
        <taxon>Bacteria</taxon>
        <taxon>Pseudomonadati</taxon>
        <taxon>Pseudomonadota</taxon>
        <taxon>Gammaproteobacteria</taxon>
        <taxon>Alteromonadales</taxon>
        <taxon>Shewanellaceae</taxon>
        <taxon>Shewanella</taxon>
    </lineage>
</organism>
<proteinExistence type="inferred from homology"/>